<gene>
    <name evidence="1" type="primary">ubiA</name>
    <name type="ordered locus">Xfasm12_0053</name>
</gene>
<comment type="function">
    <text evidence="1">Catalyzes the prenylation of para-hydroxybenzoate (PHB) with an all-trans polyprenyl group. Mediates the second step in the final reaction sequence of ubiquinone-8 (UQ-8) biosynthesis, which is the condensation of the polyisoprenoid side chain with PHB, generating the first membrane-bound Q intermediate 3-octaprenyl-4-hydroxybenzoate.</text>
</comment>
<comment type="catalytic activity">
    <reaction evidence="1">
        <text>all-trans-octaprenyl diphosphate + 4-hydroxybenzoate = 4-hydroxy-3-(all-trans-octaprenyl)benzoate + diphosphate</text>
        <dbReference type="Rhea" id="RHEA:27782"/>
        <dbReference type="ChEBI" id="CHEBI:1617"/>
        <dbReference type="ChEBI" id="CHEBI:17879"/>
        <dbReference type="ChEBI" id="CHEBI:33019"/>
        <dbReference type="ChEBI" id="CHEBI:57711"/>
        <dbReference type="EC" id="2.5.1.39"/>
    </reaction>
</comment>
<comment type="cofactor">
    <cofactor evidence="1">
        <name>Mg(2+)</name>
        <dbReference type="ChEBI" id="CHEBI:18420"/>
    </cofactor>
</comment>
<comment type="pathway">
    <text evidence="1">Cofactor biosynthesis; ubiquinone biosynthesis.</text>
</comment>
<comment type="subcellular location">
    <subcellularLocation>
        <location evidence="1">Cell inner membrane</location>
        <topology evidence="1">Multi-pass membrane protein</topology>
    </subcellularLocation>
</comment>
<comment type="similarity">
    <text evidence="1">Belongs to the UbiA prenyltransferase family.</text>
</comment>
<evidence type="ECO:0000255" key="1">
    <source>
        <dbReference type="HAMAP-Rule" id="MF_01635"/>
    </source>
</evidence>
<organism>
    <name type="scientific">Xylella fastidiosa (strain M12)</name>
    <dbReference type="NCBI Taxonomy" id="405440"/>
    <lineage>
        <taxon>Bacteria</taxon>
        <taxon>Pseudomonadati</taxon>
        <taxon>Pseudomonadota</taxon>
        <taxon>Gammaproteobacteria</taxon>
        <taxon>Lysobacterales</taxon>
        <taxon>Lysobacteraceae</taxon>
        <taxon>Xylella</taxon>
    </lineage>
</organism>
<accession>B0U2A2</accession>
<protein>
    <recommendedName>
        <fullName evidence="1">4-hydroxybenzoate octaprenyltransferase</fullName>
        <ecNumber evidence="1">2.5.1.39</ecNumber>
    </recommendedName>
    <alternativeName>
        <fullName evidence="1">4-HB polyprenyltransferase</fullName>
    </alternativeName>
</protein>
<name>UBIA_XYLFM</name>
<reference key="1">
    <citation type="journal article" date="2010" name="J. Bacteriol.">
        <title>Whole genome sequences of two Xylella fastidiosa strains (M12 and M23) causing almond leaf scorch disease in California.</title>
        <authorList>
            <person name="Chen J."/>
            <person name="Xie G."/>
            <person name="Han S."/>
            <person name="Chertkov O."/>
            <person name="Sims D."/>
            <person name="Civerolo E.L."/>
        </authorList>
    </citation>
    <scope>NUCLEOTIDE SEQUENCE [LARGE SCALE GENOMIC DNA]</scope>
    <source>
        <strain>M12</strain>
    </source>
</reference>
<keyword id="KW-0997">Cell inner membrane</keyword>
<keyword id="KW-1003">Cell membrane</keyword>
<keyword id="KW-0460">Magnesium</keyword>
<keyword id="KW-0472">Membrane</keyword>
<keyword id="KW-0808">Transferase</keyword>
<keyword id="KW-0812">Transmembrane</keyword>
<keyword id="KW-1133">Transmembrane helix</keyword>
<keyword id="KW-0831">Ubiquinone biosynthesis</keyword>
<feature type="chain" id="PRO_1000186700" description="4-hydroxybenzoate octaprenyltransferase">
    <location>
        <begin position="1"/>
        <end position="299"/>
    </location>
</feature>
<feature type="transmembrane region" description="Helical" evidence="1">
    <location>
        <begin position="33"/>
        <end position="53"/>
    </location>
</feature>
<feature type="transmembrane region" description="Helical" evidence="1">
    <location>
        <begin position="56"/>
        <end position="76"/>
    </location>
</feature>
<feature type="transmembrane region" description="Helical" evidence="1">
    <location>
        <begin position="107"/>
        <end position="127"/>
    </location>
</feature>
<feature type="transmembrane region" description="Helical" evidence="1">
    <location>
        <begin position="151"/>
        <end position="171"/>
    </location>
</feature>
<feature type="transmembrane region" description="Helical" evidence="1">
    <location>
        <begin position="180"/>
        <end position="200"/>
    </location>
</feature>
<feature type="transmembrane region" description="Helical" evidence="1">
    <location>
        <begin position="213"/>
        <end position="233"/>
    </location>
</feature>
<feature type="transmembrane region" description="Helical" evidence="1">
    <location>
        <begin position="247"/>
        <end position="267"/>
    </location>
</feature>
<feature type="transmembrane region" description="Helical" evidence="1">
    <location>
        <begin position="278"/>
        <end position="298"/>
    </location>
</feature>
<dbReference type="EC" id="2.5.1.39" evidence="1"/>
<dbReference type="EMBL" id="CP000941">
    <property type="protein sequence ID" value="ACA11099.1"/>
    <property type="molecule type" value="Genomic_DNA"/>
</dbReference>
<dbReference type="RefSeq" id="WP_004085055.1">
    <property type="nucleotide sequence ID" value="NC_010513.1"/>
</dbReference>
<dbReference type="SMR" id="B0U2A2"/>
<dbReference type="KEGG" id="xfm:Xfasm12_0053"/>
<dbReference type="HOGENOM" id="CLU_034879_1_0_6"/>
<dbReference type="UniPathway" id="UPA00232"/>
<dbReference type="GO" id="GO:0005886">
    <property type="term" value="C:plasma membrane"/>
    <property type="evidence" value="ECO:0007669"/>
    <property type="project" value="UniProtKB-SubCell"/>
</dbReference>
<dbReference type="GO" id="GO:0008412">
    <property type="term" value="F:4-hydroxybenzoate polyprenyltransferase activity"/>
    <property type="evidence" value="ECO:0007669"/>
    <property type="project" value="UniProtKB-UniRule"/>
</dbReference>
<dbReference type="GO" id="GO:0006744">
    <property type="term" value="P:ubiquinone biosynthetic process"/>
    <property type="evidence" value="ECO:0007669"/>
    <property type="project" value="UniProtKB-UniRule"/>
</dbReference>
<dbReference type="CDD" id="cd13959">
    <property type="entry name" value="PT_UbiA_COQ2"/>
    <property type="match status" value="1"/>
</dbReference>
<dbReference type="FunFam" id="1.10.357.140:FF:000002">
    <property type="entry name" value="4-hydroxybenzoate octaprenyltransferase"/>
    <property type="match status" value="1"/>
</dbReference>
<dbReference type="FunFam" id="1.20.120.1780:FF:000001">
    <property type="entry name" value="4-hydroxybenzoate octaprenyltransferase"/>
    <property type="match status" value="1"/>
</dbReference>
<dbReference type="Gene3D" id="1.10.357.140">
    <property type="entry name" value="UbiA prenyltransferase"/>
    <property type="match status" value="1"/>
</dbReference>
<dbReference type="Gene3D" id="1.20.120.1780">
    <property type="entry name" value="UbiA prenyltransferase"/>
    <property type="match status" value="1"/>
</dbReference>
<dbReference type="HAMAP" id="MF_01635">
    <property type="entry name" value="UbiA"/>
    <property type="match status" value="1"/>
</dbReference>
<dbReference type="InterPro" id="IPR006370">
    <property type="entry name" value="HB_polyprenyltransferase-like"/>
</dbReference>
<dbReference type="InterPro" id="IPR039653">
    <property type="entry name" value="Prenyltransferase"/>
</dbReference>
<dbReference type="InterPro" id="IPR000537">
    <property type="entry name" value="UbiA_prenyltransferase"/>
</dbReference>
<dbReference type="InterPro" id="IPR030470">
    <property type="entry name" value="UbiA_prenylTrfase_CS"/>
</dbReference>
<dbReference type="InterPro" id="IPR044878">
    <property type="entry name" value="UbiA_sf"/>
</dbReference>
<dbReference type="NCBIfam" id="TIGR01474">
    <property type="entry name" value="ubiA_proteo"/>
    <property type="match status" value="1"/>
</dbReference>
<dbReference type="PANTHER" id="PTHR11048:SF28">
    <property type="entry name" value="4-HYDROXYBENZOATE POLYPRENYLTRANSFERASE, MITOCHONDRIAL"/>
    <property type="match status" value="1"/>
</dbReference>
<dbReference type="PANTHER" id="PTHR11048">
    <property type="entry name" value="PRENYLTRANSFERASES"/>
    <property type="match status" value="1"/>
</dbReference>
<dbReference type="Pfam" id="PF01040">
    <property type="entry name" value="UbiA"/>
    <property type="match status" value="1"/>
</dbReference>
<dbReference type="PROSITE" id="PS00943">
    <property type="entry name" value="UBIA"/>
    <property type="match status" value="1"/>
</dbReference>
<sequence>MAYERFTSAITLLLHWRNRLDPYWKLARGDRPVGFLLLLWPTWWALWLAADGVPPWWTLCVFTTGIWLTRSAGCVINDYTDRWLDPHVERTCTRPLVTGTVSPRNALLMFATLMLIAFGLVLTMNQLTVLLSVAGLFLAMTYPYLKRYTHLPQVYLGLAFGWGIPMAFAAIQGKVPTLAWLLYIANILWTTAYDTWYAMVDRDDDIKMGAKSIAILFAELDLVVQGVLYTLMLLTLCLVGLRATLSHTYWISLISAVALIGYQFIIARRREPTACFRAFMHNNWVGMTIFAGIALATTH</sequence>
<proteinExistence type="inferred from homology"/>